<proteinExistence type="inferred from homology"/>
<feature type="chain" id="PRO_0000122133" description="Serine--tRNA ligase">
    <location>
        <begin position="1"/>
        <end position="424"/>
    </location>
</feature>
<feature type="binding site" evidence="1">
    <location>
        <begin position="230"/>
        <end position="232"/>
    </location>
    <ligand>
        <name>L-serine</name>
        <dbReference type="ChEBI" id="CHEBI:33384"/>
    </ligand>
</feature>
<feature type="binding site" evidence="1">
    <location>
        <begin position="261"/>
        <end position="263"/>
    </location>
    <ligand>
        <name>ATP</name>
        <dbReference type="ChEBI" id="CHEBI:30616"/>
    </ligand>
</feature>
<feature type="binding site" evidence="1">
    <location>
        <position position="284"/>
    </location>
    <ligand>
        <name>L-serine</name>
        <dbReference type="ChEBI" id="CHEBI:33384"/>
    </ligand>
</feature>
<feature type="binding site" evidence="1">
    <location>
        <begin position="348"/>
        <end position="351"/>
    </location>
    <ligand>
        <name>ATP</name>
        <dbReference type="ChEBI" id="CHEBI:30616"/>
    </ligand>
</feature>
<feature type="binding site" evidence="1">
    <location>
        <position position="384"/>
    </location>
    <ligand>
        <name>L-serine</name>
        <dbReference type="ChEBI" id="CHEBI:33384"/>
    </ligand>
</feature>
<dbReference type="EC" id="6.1.1.11" evidence="1"/>
<dbReference type="EMBL" id="AE005672">
    <property type="protein sequence ID" value="AAK74574.1"/>
    <property type="molecule type" value="Genomic_DNA"/>
</dbReference>
<dbReference type="PIR" id="E95047">
    <property type="entry name" value="E95047"/>
</dbReference>
<dbReference type="RefSeq" id="WP_000884253.1">
    <property type="nucleotide sequence ID" value="NZ_CP155539.1"/>
</dbReference>
<dbReference type="SMR" id="Q97SG0"/>
<dbReference type="ChEMBL" id="CHEMBL5886"/>
<dbReference type="PaxDb" id="170187-SP_0411"/>
<dbReference type="EnsemblBacteria" id="AAK74574">
    <property type="protein sequence ID" value="AAK74574"/>
    <property type="gene ID" value="SP_0411"/>
</dbReference>
<dbReference type="KEGG" id="spn:SP_0411"/>
<dbReference type="eggNOG" id="COG0172">
    <property type="taxonomic scope" value="Bacteria"/>
</dbReference>
<dbReference type="PhylomeDB" id="Q97SG0"/>
<dbReference type="BioCyc" id="SPNE170187:G1FZB-426-MONOMER"/>
<dbReference type="UniPathway" id="UPA00906">
    <property type="reaction ID" value="UER00895"/>
</dbReference>
<dbReference type="PRO" id="PR:Q97SG0"/>
<dbReference type="Proteomes" id="UP000000585">
    <property type="component" value="Chromosome"/>
</dbReference>
<dbReference type="GO" id="GO:0005737">
    <property type="term" value="C:cytoplasm"/>
    <property type="evidence" value="ECO:0007669"/>
    <property type="project" value="UniProtKB-SubCell"/>
</dbReference>
<dbReference type="GO" id="GO:0005524">
    <property type="term" value="F:ATP binding"/>
    <property type="evidence" value="ECO:0007669"/>
    <property type="project" value="UniProtKB-UniRule"/>
</dbReference>
<dbReference type="GO" id="GO:0140096">
    <property type="term" value="F:catalytic activity, acting on a protein"/>
    <property type="evidence" value="ECO:0007669"/>
    <property type="project" value="UniProtKB-ARBA"/>
</dbReference>
<dbReference type="GO" id="GO:0004828">
    <property type="term" value="F:serine-tRNA ligase activity"/>
    <property type="evidence" value="ECO:0007669"/>
    <property type="project" value="UniProtKB-UniRule"/>
</dbReference>
<dbReference type="GO" id="GO:0016740">
    <property type="term" value="F:transferase activity"/>
    <property type="evidence" value="ECO:0007669"/>
    <property type="project" value="UniProtKB-ARBA"/>
</dbReference>
<dbReference type="GO" id="GO:0016260">
    <property type="term" value="P:selenocysteine biosynthetic process"/>
    <property type="evidence" value="ECO:0007669"/>
    <property type="project" value="UniProtKB-UniRule"/>
</dbReference>
<dbReference type="GO" id="GO:0006434">
    <property type="term" value="P:seryl-tRNA aminoacylation"/>
    <property type="evidence" value="ECO:0007669"/>
    <property type="project" value="UniProtKB-UniRule"/>
</dbReference>
<dbReference type="CDD" id="cd00770">
    <property type="entry name" value="SerRS_core"/>
    <property type="match status" value="1"/>
</dbReference>
<dbReference type="Gene3D" id="3.30.930.10">
    <property type="entry name" value="Bira Bifunctional Protein, Domain 2"/>
    <property type="match status" value="1"/>
</dbReference>
<dbReference type="Gene3D" id="1.10.287.40">
    <property type="entry name" value="Serine-tRNA synthetase, tRNA binding domain"/>
    <property type="match status" value="1"/>
</dbReference>
<dbReference type="HAMAP" id="MF_00176">
    <property type="entry name" value="Ser_tRNA_synth_type1"/>
    <property type="match status" value="1"/>
</dbReference>
<dbReference type="InterPro" id="IPR002314">
    <property type="entry name" value="aa-tRNA-synt_IIb"/>
</dbReference>
<dbReference type="InterPro" id="IPR006195">
    <property type="entry name" value="aa-tRNA-synth_II"/>
</dbReference>
<dbReference type="InterPro" id="IPR045864">
    <property type="entry name" value="aa-tRNA-synth_II/BPL/LPL"/>
</dbReference>
<dbReference type="InterPro" id="IPR002317">
    <property type="entry name" value="Ser-tRNA-ligase_type_1"/>
</dbReference>
<dbReference type="InterPro" id="IPR015866">
    <property type="entry name" value="Ser-tRNA-synth_1_N"/>
</dbReference>
<dbReference type="InterPro" id="IPR042103">
    <property type="entry name" value="SerRS_1_N_sf"/>
</dbReference>
<dbReference type="InterPro" id="IPR033729">
    <property type="entry name" value="SerRS_core"/>
</dbReference>
<dbReference type="InterPro" id="IPR010978">
    <property type="entry name" value="tRNA-bd_arm"/>
</dbReference>
<dbReference type="NCBIfam" id="TIGR00414">
    <property type="entry name" value="serS"/>
    <property type="match status" value="1"/>
</dbReference>
<dbReference type="PANTHER" id="PTHR43697:SF1">
    <property type="entry name" value="SERINE--TRNA LIGASE"/>
    <property type="match status" value="1"/>
</dbReference>
<dbReference type="PANTHER" id="PTHR43697">
    <property type="entry name" value="SERYL-TRNA SYNTHETASE"/>
    <property type="match status" value="1"/>
</dbReference>
<dbReference type="Pfam" id="PF02403">
    <property type="entry name" value="Seryl_tRNA_N"/>
    <property type="match status" value="1"/>
</dbReference>
<dbReference type="Pfam" id="PF00587">
    <property type="entry name" value="tRNA-synt_2b"/>
    <property type="match status" value="1"/>
</dbReference>
<dbReference type="PIRSF" id="PIRSF001529">
    <property type="entry name" value="Ser-tRNA-synth_IIa"/>
    <property type="match status" value="1"/>
</dbReference>
<dbReference type="PRINTS" id="PR00981">
    <property type="entry name" value="TRNASYNTHSER"/>
</dbReference>
<dbReference type="SUPFAM" id="SSF55681">
    <property type="entry name" value="Class II aaRS and biotin synthetases"/>
    <property type="match status" value="1"/>
</dbReference>
<dbReference type="SUPFAM" id="SSF46589">
    <property type="entry name" value="tRNA-binding arm"/>
    <property type="match status" value="1"/>
</dbReference>
<dbReference type="PROSITE" id="PS50862">
    <property type="entry name" value="AA_TRNA_LIGASE_II"/>
    <property type="match status" value="1"/>
</dbReference>
<keyword id="KW-0030">Aminoacyl-tRNA synthetase</keyword>
<keyword id="KW-0067">ATP-binding</keyword>
<keyword id="KW-0963">Cytoplasm</keyword>
<keyword id="KW-0436">Ligase</keyword>
<keyword id="KW-0547">Nucleotide-binding</keyword>
<keyword id="KW-0648">Protein biosynthesis</keyword>
<keyword id="KW-1185">Reference proteome</keyword>
<sequence>MLDIKRIRTDFEAVAEKLATRGVDAAVLNEMKEIDAKRRNILVKVETLKAERNTVSAEIAQAKRNKENTDDKIAAMQNLSAEVKALDAELAEIDAKLTEFTTTLPNIPADSVPVGADEDDNVEVRRWGTPREFDFEPKAHWDLGEDLGILDWERGGKVTGARFLFYKGLGARLERAIYNFMLDEHGKEGYTEVITPYIVNHDSMFGTGQYPKFKEDTFELSDTNFVLIPTAEVPLTNYYRDEILDGKDLPIYFTAMSPSFRSEAGSAGRDTRGLIRLHQFHKVEMVKFAKPEESYEELEKMTANAENILQKLNLPYRVVALSTGDMGFSAAKTYDLEVWIPAQNNYREISSCSNTEDFQARRAQIRYRDEADGKVKLLHTLNGSGLAVGRTVAAILENYQNEDGSVTIPEALRPYMGGAEVIKP</sequence>
<accession>Q97SG0</accession>
<reference key="1">
    <citation type="journal article" date="2001" name="Science">
        <title>Complete genome sequence of a virulent isolate of Streptococcus pneumoniae.</title>
        <authorList>
            <person name="Tettelin H."/>
            <person name="Nelson K.E."/>
            <person name="Paulsen I.T."/>
            <person name="Eisen J.A."/>
            <person name="Read T.D."/>
            <person name="Peterson S.N."/>
            <person name="Heidelberg J.F."/>
            <person name="DeBoy R.T."/>
            <person name="Haft D.H."/>
            <person name="Dodson R.J."/>
            <person name="Durkin A.S."/>
            <person name="Gwinn M.L."/>
            <person name="Kolonay J.F."/>
            <person name="Nelson W.C."/>
            <person name="Peterson J.D."/>
            <person name="Umayam L.A."/>
            <person name="White O."/>
            <person name="Salzberg S.L."/>
            <person name="Lewis M.R."/>
            <person name="Radune D."/>
            <person name="Holtzapple E.K."/>
            <person name="Khouri H.M."/>
            <person name="Wolf A.M."/>
            <person name="Utterback T.R."/>
            <person name="Hansen C.L."/>
            <person name="McDonald L.A."/>
            <person name="Feldblyum T.V."/>
            <person name="Angiuoli S.V."/>
            <person name="Dickinson T."/>
            <person name="Hickey E.K."/>
            <person name="Holt I.E."/>
            <person name="Loftus B.J."/>
            <person name="Yang F."/>
            <person name="Smith H.O."/>
            <person name="Venter J.C."/>
            <person name="Dougherty B.A."/>
            <person name="Morrison D.A."/>
            <person name="Hollingshead S.K."/>
            <person name="Fraser C.M."/>
        </authorList>
    </citation>
    <scope>NUCLEOTIDE SEQUENCE [LARGE SCALE GENOMIC DNA]</scope>
    <source>
        <strain>ATCC BAA-334 / TIGR4</strain>
    </source>
</reference>
<organism>
    <name type="scientific">Streptococcus pneumoniae serotype 4 (strain ATCC BAA-334 / TIGR4)</name>
    <dbReference type="NCBI Taxonomy" id="170187"/>
    <lineage>
        <taxon>Bacteria</taxon>
        <taxon>Bacillati</taxon>
        <taxon>Bacillota</taxon>
        <taxon>Bacilli</taxon>
        <taxon>Lactobacillales</taxon>
        <taxon>Streptococcaceae</taxon>
        <taxon>Streptococcus</taxon>
    </lineage>
</organism>
<evidence type="ECO:0000255" key="1">
    <source>
        <dbReference type="HAMAP-Rule" id="MF_00176"/>
    </source>
</evidence>
<name>SYS_STRPN</name>
<comment type="function">
    <text evidence="1">Catalyzes the attachment of serine to tRNA(Ser). Is also able to aminoacylate tRNA(Sec) with serine, to form the misacylated tRNA L-seryl-tRNA(Sec), which will be further converted into selenocysteinyl-tRNA(Sec).</text>
</comment>
<comment type="catalytic activity">
    <reaction evidence="1">
        <text>tRNA(Ser) + L-serine + ATP = L-seryl-tRNA(Ser) + AMP + diphosphate + H(+)</text>
        <dbReference type="Rhea" id="RHEA:12292"/>
        <dbReference type="Rhea" id="RHEA-COMP:9669"/>
        <dbReference type="Rhea" id="RHEA-COMP:9703"/>
        <dbReference type="ChEBI" id="CHEBI:15378"/>
        <dbReference type="ChEBI" id="CHEBI:30616"/>
        <dbReference type="ChEBI" id="CHEBI:33019"/>
        <dbReference type="ChEBI" id="CHEBI:33384"/>
        <dbReference type="ChEBI" id="CHEBI:78442"/>
        <dbReference type="ChEBI" id="CHEBI:78533"/>
        <dbReference type="ChEBI" id="CHEBI:456215"/>
        <dbReference type="EC" id="6.1.1.11"/>
    </reaction>
</comment>
<comment type="catalytic activity">
    <reaction evidence="1">
        <text>tRNA(Sec) + L-serine + ATP = L-seryl-tRNA(Sec) + AMP + diphosphate + H(+)</text>
        <dbReference type="Rhea" id="RHEA:42580"/>
        <dbReference type="Rhea" id="RHEA-COMP:9742"/>
        <dbReference type="Rhea" id="RHEA-COMP:10128"/>
        <dbReference type="ChEBI" id="CHEBI:15378"/>
        <dbReference type="ChEBI" id="CHEBI:30616"/>
        <dbReference type="ChEBI" id="CHEBI:33019"/>
        <dbReference type="ChEBI" id="CHEBI:33384"/>
        <dbReference type="ChEBI" id="CHEBI:78442"/>
        <dbReference type="ChEBI" id="CHEBI:78533"/>
        <dbReference type="ChEBI" id="CHEBI:456215"/>
        <dbReference type="EC" id="6.1.1.11"/>
    </reaction>
</comment>
<comment type="pathway">
    <text evidence="1">Aminoacyl-tRNA biosynthesis; selenocysteinyl-tRNA(Sec) biosynthesis; L-seryl-tRNA(Sec) from L-serine and tRNA(Sec): step 1/1.</text>
</comment>
<comment type="subunit">
    <text evidence="1">Homodimer. The tRNA molecule binds across the dimer.</text>
</comment>
<comment type="subcellular location">
    <subcellularLocation>
        <location evidence="1">Cytoplasm</location>
    </subcellularLocation>
</comment>
<comment type="domain">
    <text evidence="1">Consists of two distinct domains, a catalytic core and a N-terminal extension that is involved in tRNA binding.</text>
</comment>
<comment type="similarity">
    <text evidence="1">Belongs to the class-II aminoacyl-tRNA synthetase family. Type-1 seryl-tRNA synthetase subfamily.</text>
</comment>
<protein>
    <recommendedName>
        <fullName evidence="1">Serine--tRNA ligase</fullName>
        <ecNumber evidence="1">6.1.1.11</ecNumber>
    </recommendedName>
    <alternativeName>
        <fullName evidence="1">Seryl-tRNA synthetase</fullName>
        <shortName evidence="1">SerRS</shortName>
    </alternativeName>
    <alternativeName>
        <fullName evidence="1">Seryl-tRNA(Ser/Sec) synthetase</fullName>
    </alternativeName>
</protein>
<gene>
    <name evidence="1" type="primary">serS</name>
    <name type="ordered locus">SP_0411</name>
</gene>